<reference key="1">
    <citation type="journal article" date="1996" name="Nucleic Acids Res.">
        <title>Complete sequence analysis of the genome of the bacterium Mycoplasma pneumoniae.</title>
        <authorList>
            <person name="Himmelreich R."/>
            <person name="Hilbert H."/>
            <person name="Plagens H."/>
            <person name="Pirkl E."/>
            <person name="Li B.-C."/>
            <person name="Herrmann R."/>
        </authorList>
    </citation>
    <scope>NUCLEOTIDE SEQUENCE [LARGE SCALE GENOMIC DNA]</scope>
    <source>
        <strain>ATCC 29342 / M129 / Subtype 1</strain>
    </source>
</reference>
<reference key="2">
    <citation type="journal article" date="2000" name="Nucleic Acids Res.">
        <title>Re-annotating the Mycoplasma pneumoniae genome sequence: adding value, function and reading frames.</title>
        <authorList>
            <person name="Dandekar T."/>
            <person name="Huynen M."/>
            <person name="Regula J.T."/>
            <person name="Ueberle B."/>
            <person name="Zimmermann C.U."/>
            <person name="Andrade M.A."/>
            <person name="Doerks T."/>
            <person name="Sanchez-Pulido L."/>
            <person name="Snel B."/>
            <person name="Suyama M."/>
            <person name="Yuan Y.P."/>
            <person name="Herrmann R."/>
            <person name="Bork P."/>
        </authorList>
    </citation>
    <scope>IDENTIFICATION</scope>
    <source>
        <strain>ATCC 29342 / M129 / Subtype 1</strain>
    </source>
</reference>
<keyword id="KW-1003">Cell membrane</keyword>
<keyword id="KW-0472">Membrane</keyword>
<keyword id="KW-1185">Reference proteome</keyword>
<keyword id="KW-0812">Transmembrane</keyword>
<keyword id="KW-1133">Transmembrane helix</keyword>
<accession>Q9EXD1</accession>
<name>Y270_MYCPN</name>
<organism>
    <name type="scientific">Mycoplasma pneumoniae (strain ATCC 29342 / M129 / Subtype 1)</name>
    <name type="common">Mycoplasmoides pneumoniae</name>
    <dbReference type="NCBI Taxonomy" id="272634"/>
    <lineage>
        <taxon>Bacteria</taxon>
        <taxon>Bacillati</taxon>
        <taxon>Mycoplasmatota</taxon>
        <taxon>Mycoplasmoidales</taxon>
        <taxon>Mycoplasmoidaceae</taxon>
        <taxon>Mycoplasmoides</taxon>
    </lineage>
</organism>
<sequence length="95" mass="11066">MQYTVLIPLFIFIGAMVLFGFSFQKKQPQRRIVQILFLAYCVDFLALIIAVMMLTFLSYDDLMLGVLIPVLILSIIMFFVMIIAHYPLMKRLFGH</sequence>
<evidence type="ECO:0000255" key="1"/>
<evidence type="ECO:0000305" key="2"/>
<proteinExistence type="predicted"/>
<gene>
    <name type="ordered locus">MPN_270</name>
    <name type="ORF">MP563.1</name>
</gene>
<protein>
    <recommendedName>
        <fullName>Uncharacterized protein MG131 homolog</fullName>
    </recommendedName>
</protein>
<dbReference type="EMBL" id="U00089">
    <property type="protein sequence ID" value="AAG34756.1"/>
    <property type="molecule type" value="Genomic_DNA"/>
</dbReference>
<dbReference type="RefSeq" id="NP_109958.1">
    <property type="nucleotide sequence ID" value="NC_000912.1"/>
</dbReference>
<dbReference type="RefSeq" id="WP_010874627.1">
    <property type="nucleotide sequence ID" value="NZ_OU342337.1"/>
</dbReference>
<dbReference type="SMR" id="Q9EXD1"/>
<dbReference type="STRING" id="272634.MPN_270"/>
<dbReference type="EnsemblBacteria" id="AAG34756">
    <property type="protein sequence ID" value="AAG34756"/>
    <property type="gene ID" value="MPN_270"/>
</dbReference>
<dbReference type="KEGG" id="mpn:MPN_270"/>
<dbReference type="PATRIC" id="fig|272634.6.peg.289"/>
<dbReference type="HOGENOM" id="CLU_2369800_0_0_14"/>
<dbReference type="BioCyc" id="MPNE272634:G1GJ3-423-MONOMER"/>
<dbReference type="Proteomes" id="UP000000808">
    <property type="component" value="Chromosome"/>
</dbReference>
<dbReference type="GO" id="GO:0005886">
    <property type="term" value="C:plasma membrane"/>
    <property type="evidence" value="ECO:0007669"/>
    <property type="project" value="UniProtKB-SubCell"/>
</dbReference>
<dbReference type="NCBIfam" id="NF045746">
    <property type="entry name" value="MPN270"/>
    <property type="match status" value="1"/>
</dbReference>
<comment type="subcellular location">
    <subcellularLocation>
        <location evidence="2">Cell membrane</location>
        <topology evidence="2">Multi-pass membrane protein</topology>
    </subcellularLocation>
</comment>
<feature type="chain" id="PRO_0000210433" description="Uncharacterized protein MG131 homolog">
    <location>
        <begin position="1"/>
        <end position="95"/>
    </location>
</feature>
<feature type="transmembrane region" description="Helical" evidence="1">
    <location>
        <begin position="3"/>
        <end position="23"/>
    </location>
</feature>
<feature type="transmembrane region" description="Helical" evidence="1">
    <location>
        <begin position="35"/>
        <end position="55"/>
    </location>
</feature>
<feature type="transmembrane region" description="Helical" evidence="1">
    <location>
        <begin position="63"/>
        <end position="83"/>
    </location>
</feature>